<comment type="function">
    <text evidence="1">Probable glycosyltransferase.</text>
</comment>
<comment type="pathway">
    <text evidence="1">Protein modification; protein glycosylation.</text>
</comment>
<comment type="subcellular location">
    <subcellularLocation>
        <location evidence="1">Golgi apparatus membrane</location>
        <topology evidence="3">Single-pass type II membrane protein</topology>
    </subcellularLocation>
</comment>
<comment type="similarity">
    <text evidence="4">Belongs to the glycosyltransferase 14 family.</text>
</comment>
<dbReference type="EC" id="2.4.1.-" evidence="1"/>
<dbReference type="EMBL" id="CR956640">
    <property type="protein sequence ID" value="CAN13142.1"/>
    <property type="molecule type" value="Genomic_DNA"/>
</dbReference>
<dbReference type="RefSeq" id="NP_001107171.1">
    <property type="nucleotide sequence ID" value="NM_001113699.1"/>
</dbReference>
<dbReference type="RefSeq" id="XP_005673090.1">
    <property type="nucleotide sequence ID" value="XM_005673033.3"/>
</dbReference>
<dbReference type="SMR" id="A5GFW8"/>
<dbReference type="FunCoup" id="A5GFW8">
    <property type="interactions" value="12"/>
</dbReference>
<dbReference type="STRING" id="9823.ENSSSCP00000007989"/>
<dbReference type="CAZy" id="GT14">
    <property type="family name" value="Glycosyltransferase Family 14"/>
</dbReference>
<dbReference type="GlyCosmos" id="A5GFW8">
    <property type="glycosylation" value="2 sites, No reported glycans"/>
</dbReference>
<dbReference type="GlyGen" id="A5GFW8">
    <property type="glycosylation" value="3 sites"/>
</dbReference>
<dbReference type="PaxDb" id="9823-ENSSSCP00000007989"/>
<dbReference type="Ensembl" id="ENSSSCT00000008207.3">
    <property type="protein sequence ID" value="ENSSSCP00000007989.3"/>
    <property type="gene ID" value="ENSSSCG00000007497.3"/>
</dbReference>
<dbReference type="Ensembl" id="ENSSSCT00030087288.1">
    <property type="protein sequence ID" value="ENSSSCP00030040298.1"/>
    <property type="gene ID" value="ENSSSCG00030062413.1"/>
</dbReference>
<dbReference type="Ensembl" id="ENSSSCT00045033715.1">
    <property type="protein sequence ID" value="ENSSSCP00045023380.1"/>
    <property type="gene ID" value="ENSSSCG00045019789.1"/>
</dbReference>
<dbReference type="Ensembl" id="ENSSSCT00050058448.1">
    <property type="protein sequence ID" value="ENSSSCP00050025038.1"/>
    <property type="gene ID" value="ENSSSCG00050042987.1"/>
</dbReference>
<dbReference type="Ensembl" id="ENSSSCT00070036788.1">
    <property type="protein sequence ID" value="ENSSSCP00070030754.1"/>
    <property type="gene ID" value="ENSSSCG00070018664.1"/>
</dbReference>
<dbReference type="Ensembl" id="ENSSSCT00090002734">
    <property type="protein sequence ID" value="ENSSSCP00090001580"/>
    <property type="gene ID" value="ENSSSCG00090001708"/>
</dbReference>
<dbReference type="Ensembl" id="ENSSSCT00105060874">
    <property type="protein sequence ID" value="ENSSSCP00105043172"/>
    <property type="gene ID" value="ENSSSCG00105031989"/>
</dbReference>
<dbReference type="Ensembl" id="ENSSSCT00110051221">
    <property type="protein sequence ID" value="ENSSSCP00110035831"/>
    <property type="gene ID" value="ENSSSCG00110026673"/>
</dbReference>
<dbReference type="Ensembl" id="ENSSSCT00115018026">
    <property type="protein sequence ID" value="ENSSSCP00115017019"/>
    <property type="gene ID" value="ENSSSCG00115010483"/>
</dbReference>
<dbReference type="Ensembl" id="ENSSSCT00130027062">
    <property type="protein sequence ID" value="ENSSSCP00130018348"/>
    <property type="gene ID" value="ENSSSCG00130013662"/>
</dbReference>
<dbReference type="GeneID" id="100134987"/>
<dbReference type="KEGG" id="ssc:100134987"/>
<dbReference type="CTD" id="140687"/>
<dbReference type="eggNOG" id="KOG0799">
    <property type="taxonomic scope" value="Eukaryota"/>
</dbReference>
<dbReference type="GeneTree" id="ENSGT00940000160402"/>
<dbReference type="HOGENOM" id="CLU_032341_1_0_1"/>
<dbReference type="InParanoid" id="A5GFW8"/>
<dbReference type="OMA" id="TCLERWH"/>
<dbReference type="OrthoDB" id="2019572at2759"/>
<dbReference type="TreeFam" id="TF315534"/>
<dbReference type="Reactome" id="R-SSC-913709">
    <property type="pathway name" value="O-linked glycosylation of mucins"/>
</dbReference>
<dbReference type="UniPathway" id="UPA00378"/>
<dbReference type="Proteomes" id="UP000008227">
    <property type="component" value="Chromosome 17"/>
</dbReference>
<dbReference type="Proteomes" id="UP000314985">
    <property type="component" value="Chromosome 17"/>
</dbReference>
<dbReference type="Proteomes" id="UP000694570">
    <property type="component" value="Unplaced"/>
</dbReference>
<dbReference type="Proteomes" id="UP000694571">
    <property type="component" value="Unplaced"/>
</dbReference>
<dbReference type="Proteomes" id="UP000694720">
    <property type="component" value="Unplaced"/>
</dbReference>
<dbReference type="Proteomes" id="UP000694722">
    <property type="component" value="Unplaced"/>
</dbReference>
<dbReference type="Proteomes" id="UP000694723">
    <property type="component" value="Unplaced"/>
</dbReference>
<dbReference type="Proteomes" id="UP000694724">
    <property type="component" value="Unplaced"/>
</dbReference>
<dbReference type="Proteomes" id="UP000694725">
    <property type="component" value="Unplaced"/>
</dbReference>
<dbReference type="Proteomes" id="UP000694726">
    <property type="component" value="Unplaced"/>
</dbReference>
<dbReference type="Proteomes" id="UP000694727">
    <property type="component" value="Unplaced"/>
</dbReference>
<dbReference type="Proteomes" id="UP000694728">
    <property type="component" value="Unplaced"/>
</dbReference>
<dbReference type="Bgee" id="ENSSSCG00000007497">
    <property type="expression patterns" value="Expressed in epididymis and 27 other cell types or tissues"/>
</dbReference>
<dbReference type="GO" id="GO:0000139">
    <property type="term" value="C:Golgi membrane"/>
    <property type="evidence" value="ECO:0007669"/>
    <property type="project" value="UniProtKB-SubCell"/>
</dbReference>
<dbReference type="GO" id="GO:0008375">
    <property type="term" value="F:acetylglucosaminyltransferase activity"/>
    <property type="evidence" value="ECO:0000318"/>
    <property type="project" value="GO_Central"/>
</dbReference>
<dbReference type="GO" id="GO:0006486">
    <property type="term" value="P:protein glycosylation"/>
    <property type="evidence" value="ECO:0007669"/>
    <property type="project" value="UniProtKB-UniPathway"/>
</dbReference>
<dbReference type="InterPro" id="IPR003406">
    <property type="entry name" value="Glyco_trans_14"/>
</dbReference>
<dbReference type="PANTHER" id="PTHR19297:SF178">
    <property type="entry name" value="BETA-1,3-GALACTOSYL-O-GLYCOSYL-GLYCOPROTEIN BETA-1,6-N-ACETYLGLUCOSAMINYLTRANSFERASE 7"/>
    <property type="match status" value="1"/>
</dbReference>
<dbReference type="PANTHER" id="PTHR19297">
    <property type="entry name" value="GLYCOSYLTRANSFERASE 14 FAMILY MEMBER"/>
    <property type="match status" value="1"/>
</dbReference>
<dbReference type="Pfam" id="PF02485">
    <property type="entry name" value="Branch"/>
    <property type="match status" value="1"/>
</dbReference>
<accession>A5GFW8</accession>
<proteinExistence type="inferred from homology"/>
<evidence type="ECO:0000250" key="1">
    <source>
        <dbReference type="UniProtKB" id="O95395"/>
    </source>
</evidence>
<evidence type="ECO:0000250" key="2">
    <source>
        <dbReference type="UniProtKB" id="Q7YQE1"/>
    </source>
</evidence>
<evidence type="ECO:0000255" key="3"/>
<evidence type="ECO:0000305" key="4"/>
<protein>
    <recommendedName>
        <fullName evidence="1">Probable beta-1,3-galactosyl-O-glycosyl-glycoprotein beta-1,6-N-acetylglucosaminyltransferase 7</fullName>
        <ecNumber evidence="1">2.4.1.-</ecNumber>
    </recommendedName>
</protein>
<organism>
    <name type="scientific">Sus scrofa</name>
    <name type="common">Pig</name>
    <dbReference type="NCBI Taxonomy" id="9823"/>
    <lineage>
        <taxon>Eukaryota</taxon>
        <taxon>Metazoa</taxon>
        <taxon>Chordata</taxon>
        <taxon>Craniata</taxon>
        <taxon>Vertebrata</taxon>
        <taxon>Euteleostomi</taxon>
        <taxon>Mammalia</taxon>
        <taxon>Eutheria</taxon>
        <taxon>Laurasiatheria</taxon>
        <taxon>Artiodactyla</taxon>
        <taxon>Suina</taxon>
        <taxon>Suidae</taxon>
        <taxon>Sus</taxon>
    </lineage>
</organism>
<keyword id="KW-1015">Disulfide bond</keyword>
<keyword id="KW-0325">Glycoprotein</keyword>
<keyword id="KW-0328">Glycosyltransferase</keyword>
<keyword id="KW-0333">Golgi apparatus</keyword>
<keyword id="KW-0472">Membrane</keyword>
<keyword id="KW-1185">Reference proteome</keyword>
<keyword id="KW-0735">Signal-anchor</keyword>
<keyword id="KW-0808">Transferase</keyword>
<keyword id="KW-0812">Transmembrane</keyword>
<keyword id="KW-1133">Transmembrane helix</keyword>
<feature type="chain" id="PRO_0000299040" description="Probable beta-1,3-galactosyl-O-glycosyl-glycoprotein beta-1,6-N-acetylglucosaminyltransferase 7">
    <location>
        <begin position="1"/>
        <end position="429"/>
    </location>
</feature>
<feature type="topological domain" description="Cytoplasmic" evidence="3">
    <location>
        <begin position="1"/>
        <end position="8"/>
    </location>
</feature>
<feature type="transmembrane region" description="Helical; Signal-anchor for type II membrane protein" evidence="3">
    <location>
        <begin position="9"/>
        <end position="25"/>
    </location>
</feature>
<feature type="topological domain" description="Extracellular" evidence="3">
    <location>
        <begin position="26"/>
        <end position="429"/>
    </location>
</feature>
<feature type="glycosylation site" description="N-linked (GlcNAc...) asparagine" evidence="3">
    <location>
        <position position="87"/>
    </location>
</feature>
<feature type="glycosylation site" description="N-linked (GlcNAc...) asparagine" evidence="3">
    <location>
        <position position="272"/>
    </location>
</feature>
<feature type="disulfide bond" evidence="2">
    <location>
        <begin position="53"/>
        <end position="205"/>
    </location>
</feature>
<feature type="disulfide bond" evidence="2">
    <location>
        <begin position="139"/>
        <end position="354"/>
    </location>
</feature>
<feature type="disulfide bond" evidence="2">
    <location>
        <begin position="160"/>
        <end position="187"/>
    </location>
</feature>
<feature type="disulfide bond" evidence="2">
    <location>
        <begin position="363"/>
        <end position="394"/>
    </location>
</feature>
<sequence>MSQLRATKPGILVCAAIGIFVFLYLRNPTSEDPEEGPTHPAVVECGFYPDELCSALFEGKEAALQIAKFCKDPHGSEIVARLHRPGNCSRISRELHFITRPLSAEEGTFPLAYIVTIHKELALFVQLLRAIYLPQNVYCIHVDAKAPKKYKTAVQSLVNCFENIFISSKREKVAYTGFRRLQAEINCMKDLVHSKFQWSHVINLCGQDFPIKTNKDIIRYIRSKWNDKNITPGVIQPPSNKSKTSQTHREFTPEGNIYASPNERFRDDPPHNLTIYFGSASYVLTRKFVEFVLTDTRAKDMLRWSQDIHGPERHYWVTLNRLKDAPGSTPNAGWEGNVRAVKWRSEEGTVRDGCKGRYVQDSCVYGPGDLPWIIQSPSLFASQFDSAEPLVVTCLERWHRLRVLGQAEVPEEPHWHFQRESHLNRRLNP</sequence>
<name>GCNT7_PIG</name>
<reference key="1">
    <citation type="submission" date="2007-05" db="EMBL/GenBank/DDBJ databases">
        <authorList>
            <consortium name="Porcine genome sequencing project"/>
        </authorList>
    </citation>
    <scope>NUCLEOTIDE SEQUENCE [LARGE SCALE GENOMIC DNA]</scope>
</reference>
<gene>
    <name evidence="1" type="primary">GCNT7</name>
</gene>